<protein>
    <recommendedName>
        <fullName evidence="14">Monothiol glutaredoxin-S14, chloroplastic</fullName>
        <shortName evidence="15">AtGRXcp</shortName>
        <shortName evidence="14">AtGrxS14</shortName>
    </recommendedName>
    <alternativeName>
        <fullName evidence="13">CAX-interacting protein 1</fullName>
        <shortName evidence="13">CXIP1</shortName>
    </alternativeName>
</protein>
<name>GRS14_ARATH</name>
<reference key="1">
    <citation type="journal article" date="2003" name="J. Biol. Chem.">
        <title>Cloning and characterization of CXIP1 A novel PICOT domain-containing Arabidopsis protein that associates with CAX1.</title>
        <authorList>
            <person name="Cheng N.-H."/>
            <person name="Hirschi K.D."/>
        </authorList>
    </citation>
    <scope>NUCLEOTIDE SEQUENCE [MRNA]</scope>
    <scope>INTERACTION WITH CAX1</scope>
    <scope>TISSUE SPECIFICITY</scope>
    <scope>INDUCTION</scope>
    <scope>MUTAGENESIS OF 97-CYS--SER-100 AND 133-SER--THR-137</scope>
</reference>
<reference key="2">
    <citation type="journal article" date="2000" name="Nature">
        <title>Sequence and analysis of chromosome 3 of the plant Arabidopsis thaliana.</title>
        <authorList>
            <person name="Salanoubat M."/>
            <person name="Lemcke K."/>
            <person name="Rieger M."/>
            <person name="Ansorge W."/>
            <person name="Unseld M."/>
            <person name="Fartmann B."/>
            <person name="Valle G."/>
            <person name="Bloecker H."/>
            <person name="Perez-Alonso M."/>
            <person name="Obermaier B."/>
            <person name="Delseny M."/>
            <person name="Boutry M."/>
            <person name="Grivell L.A."/>
            <person name="Mache R."/>
            <person name="Puigdomenech P."/>
            <person name="De Simone V."/>
            <person name="Choisne N."/>
            <person name="Artiguenave F."/>
            <person name="Robert C."/>
            <person name="Brottier P."/>
            <person name="Wincker P."/>
            <person name="Cattolico L."/>
            <person name="Weissenbach J."/>
            <person name="Saurin W."/>
            <person name="Quetier F."/>
            <person name="Schaefer M."/>
            <person name="Mueller-Auer S."/>
            <person name="Gabel C."/>
            <person name="Fuchs M."/>
            <person name="Benes V."/>
            <person name="Wurmbach E."/>
            <person name="Drzonek H."/>
            <person name="Erfle H."/>
            <person name="Jordan N."/>
            <person name="Bangert S."/>
            <person name="Wiedelmann R."/>
            <person name="Kranz H."/>
            <person name="Voss H."/>
            <person name="Holland R."/>
            <person name="Brandt P."/>
            <person name="Nyakatura G."/>
            <person name="Vezzi A."/>
            <person name="D'Angelo M."/>
            <person name="Pallavicini A."/>
            <person name="Toppo S."/>
            <person name="Simionati B."/>
            <person name="Conrad A."/>
            <person name="Hornischer K."/>
            <person name="Kauer G."/>
            <person name="Loehnert T.-H."/>
            <person name="Nordsiek G."/>
            <person name="Reichelt J."/>
            <person name="Scharfe M."/>
            <person name="Schoen O."/>
            <person name="Bargues M."/>
            <person name="Terol J."/>
            <person name="Climent J."/>
            <person name="Navarro P."/>
            <person name="Collado C."/>
            <person name="Perez-Perez A."/>
            <person name="Ottenwaelder B."/>
            <person name="Duchemin D."/>
            <person name="Cooke R."/>
            <person name="Laudie M."/>
            <person name="Berger-Llauro C."/>
            <person name="Purnelle B."/>
            <person name="Masuy D."/>
            <person name="de Haan M."/>
            <person name="Maarse A.C."/>
            <person name="Alcaraz J.-P."/>
            <person name="Cottet A."/>
            <person name="Casacuberta E."/>
            <person name="Monfort A."/>
            <person name="Argiriou A."/>
            <person name="Flores M."/>
            <person name="Liguori R."/>
            <person name="Vitale D."/>
            <person name="Mannhaupt G."/>
            <person name="Haase D."/>
            <person name="Schoof H."/>
            <person name="Rudd S."/>
            <person name="Zaccaria P."/>
            <person name="Mewes H.-W."/>
            <person name="Mayer K.F.X."/>
            <person name="Kaul S."/>
            <person name="Town C.D."/>
            <person name="Koo H.L."/>
            <person name="Tallon L.J."/>
            <person name="Jenkins J."/>
            <person name="Rooney T."/>
            <person name="Rizzo M."/>
            <person name="Walts A."/>
            <person name="Utterback T."/>
            <person name="Fujii C.Y."/>
            <person name="Shea T.P."/>
            <person name="Creasy T.H."/>
            <person name="Haas B."/>
            <person name="Maiti R."/>
            <person name="Wu D."/>
            <person name="Peterson J."/>
            <person name="Van Aken S."/>
            <person name="Pai G."/>
            <person name="Militscher J."/>
            <person name="Sellers P."/>
            <person name="Gill J.E."/>
            <person name="Feldblyum T.V."/>
            <person name="Preuss D."/>
            <person name="Lin X."/>
            <person name="Nierman W.C."/>
            <person name="Salzberg S.L."/>
            <person name="White O."/>
            <person name="Venter J.C."/>
            <person name="Fraser C.M."/>
            <person name="Kaneko T."/>
            <person name="Nakamura Y."/>
            <person name="Sato S."/>
            <person name="Kato T."/>
            <person name="Asamizu E."/>
            <person name="Sasamoto S."/>
            <person name="Kimura T."/>
            <person name="Idesawa K."/>
            <person name="Kawashima K."/>
            <person name="Kishida Y."/>
            <person name="Kiyokawa C."/>
            <person name="Kohara M."/>
            <person name="Matsumoto M."/>
            <person name="Matsuno A."/>
            <person name="Muraki A."/>
            <person name="Nakayama S."/>
            <person name="Nakazaki N."/>
            <person name="Shinpo S."/>
            <person name="Takeuchi C."/>
            <person name="Wada T."/>
            <person name="Watanabe A."/>
            <person name="Yamada M."/>
            <person name="Yasuda M."/>
            <person name="Tabata S."/>
        </authorList>
    </citation>
    <scope>NUCLEOTIDE SEQUENCE [LARGE SCALE GENOMIC DNA]</scope>
    <source>
        <strain>cv. Columbia</strain>
    </source>
</reference>
<reference key="3">
    <citation type="journal article" date="2017" name="Plant J.">
        <title>Araport11: a complete reannotation of the Arabidopsis thaliana reference genome.</title>
        <authorList>
            <person name="Cheng C.Y."/>
            <person name="Krishnakumar V."/>
            <person name="Chan A.P."/>
            <person name="Thibaud-Nissen F."/>
            <person name="Schobel S."/>
            <person name="Town C.D."/>
        </authorList>
    </citation>
    <scope>GENOME REANNOTATION</scope>
    <source>
        <strain>cv. Columbia</strain>
    </source>
</reference>
<reference key="4">
    <citation type="journal article" date="2003" name="Science">
        <title>Empirical analysis of transcriptional activity in the Arabidopsis genome.</title>
        <authorList>
            <person name="Yamada K."/>
            <person name="Lim J."/>
            <person name="Dale J.M."/>
            <person name="Chen H."/>
            <person name="Shinn P."/>
            <person name="Palm C.J."/>
            <person name="Southwick A.M."/>
            <person name="Wu H.C."/>
            <person name="Kim C.J."/>
            <person name="Nguyen M."/>
            <person name="Pham P.K."/>
            <person name="Cheuk R.F."/>
            <person name="Karlin-Newmann G."/>
            <person name="Liu S.X."/>
            <person name="Lam B."/>
            <person name="Sakano H."/>
            <person name="Wu T."/>
            <person name="Yu G."/>
            <person name="Miranda M."/>
            <person name="Quach H.L."/>
            <person name="Tripp M."/>
            <person name="Chang C.H."/>
            <person name="Lee J.M."/>
            <person name="Toriumi M.J."/>
            <person name="Chan M.M."/>
            <person name="Tang C.C."/>
            <person name="Onodera C.S."/>
            <person name="Deng J.M."/>
            <person name="Akiyama K."/>
            <person name="Ansari Y."/>
            <person name="Arakawa T."/>
            <person name="Banh J."/>
            <person name="Banno F."/>
            <person name="Bowser L."/>
            <person name="Brooks S.Y."/>
            <person name="Carninci P."/>
            <person name="Chao Q."/>
            <person name="Choy N."/>
            <person name="Enju A."/>
            <person name="Goldsmith A.D."/>
            <person name="Gurjal M."/>
            <person name="Hansen N.F."/>
            <person name="Hayashizaki Y."/>
            <person name="Johnson-Hopson C."/>
            <person name="Hsuan V.W."/>
            <person name="Iida K."/>
            <person name="Karnes M."/>
            <person name="Khan S."/>
            <person name="Koesema E."/>
            <person name="Ishida J."/>
            <person name="Jiang P.X."/>
            <person name="Jones T."/>
            <person name="Kawai J."/>
            <person name="Kamiya A."/>
            <person name="Meyers C."/>
            <person name="Nakajima M."/>
            <person name="Narusaka M."/>
            <person name="Seki M."/>
            <person name="Sakurai T."/>
            <person name="Satou M."/>
            <person name="Tamse R."/>
            <person name="Vaysberg M."/>
            <person name="Wallender E.K."/>
            <person name="Wong C."/>
            <person name="Yamamura Y."/>
            <person name="Yuan S."/>
            <person name="Shinozaki K."/>
            <person name="Davis R.W."/>
            <person name="Theologis A."/>
            <person name="Ecker J.R."/>
        </authorList>
    </citation>
    <scope>NUCLEOTIDE SEQUENCE [LARGE SCALE MRNA]</scope>
    <source>
        <strain>cv. Columbia</strain>
    </source>
</reference>
<reference key="5">
    <citation type="journal article" date="2004" name="Cell. Mol. Life Sci.">
        <title>Plant glutaredoxins: still mysterious reducing systems.</title>
        <authorList>
            <person name="Rouhier N."/>
            <person name="Gelhaye E."/>
            <person name="Jacquot J.-P."/>
        </authorList>
    </citation>
    <scope>GENE FAMILY</scope>
    <scope>NOMENCLATURE</scope>
</reference>
<reference key="6">
    <citation type="journal article" date="2006" name="J. Biol. Chem.">
        <title>AtGRXcp, an Arabidopsis chloroplastic glutaredoxin, is critical for protection against protein oxidative damage.</title>
        <authorList>
            <person name="Cheng N.-H."/>
            <person name="Liu J.-Z."/>
            <person name="Brock A."/>
            <person name="Nelson R.S."/>
            <person name="Hirschi K.D."/>
        </authorList>
    </citation>
    <scope>FUNCTION</scope>
    <scope>SUBCELLULAR LOCATION</scope>
    <scope>TISSUE SPECIFICITY</scope>
    <scope>INDUCTION</scope>
    <scope>MUTAGENESIS OF CYS-97 AND PHE-99</scope>
    <scope>DISRUPTION PHENOTYPE</scope>
</reference>
<reference key="7">
    <citation type="journal article" date="2006" name="J. Exp. Bot.">
        <title>Genome-wide analysis of plant glutaredoxin systems.</title>
        <authorList>
            <person name="Rouhier N."/>
            <person name="Couturier J."/>
            <person name="Jacquot J.-P."/>
        </authorList>
    </citation>
    <scope>GENE FAMILY</scope>
</reference>
<reference key="8">
    <citation type="journal article" date="2007" name="Biochemistry">
        <title>CGFS-type monothiol glutaredoxins from the cyanobacterium Synechocystis PCC6803 and other evolutionary distant model organisms possess a glutathione-ligated [2Fe-2S] cluster.</title>
        <authorList>
            <person name="Picciocchi A."/>
            <person name="Saguez C."/>
            <person name="Boussac A."/>
            <person name="Cassier-Chauvat C."/>
            <person name="Chauvat F."/>
        </authorList>
    </citation>
    <scope>FUNCTION</scope>
    <scope>IRON-SULFUR CLUSTER BINDING</scope>
</reference>
<reference key="9">
    <citation type="journal article" date="2014" name="Mol. Plant">
        <title>Monothiol glutaredoxin-BolA interactions: redox control of Arabidopsis thaliana BolA2 and SufE1.</title>
        <authorList>
            <person name="Couturier J."/>
            <person name="Wu H.C."/>
            <person name="Dhalleine T."/>
            <person name="Pegeot H."/>
            <person name="Sudre D."/>
            <person name="Gualberto J.M."/>
            <person name="Jacquot J.P."/>
            <person name="Gaymard F."/>
            <person name="Vignols F."/>
            <person name="Rouhier N."/>
        </authorList>
    </citation>
    <scope>INTERACTION WITH SUFE1; BOLA1; BOLA2 AND BOLA4</scope>
    <scope>MUTAGENESIS OF CYS-97</scope>
</reference>
<reference key="10">
    <citation type="journal article" date="2014" name="Plant Signal. Behav.">
        <title>Putative roles of glutaredoxin-BolA holo-heterodimers in plants.</title>
        <authorList>
            <person name="Dhalleine T."/>
            <person name="Rouhier N."/>
            <person name="Couturier J."/>
        </authorList>
    </citation>
    <scope>FUNCTION</scope>
    <scope>INTERACTION WITH BOLA1</scope>
</reference>
<reference key="11">
    <citation type="journal article" date="2019" name="Plant Sci.">
        <title>Novel interactions of selenium binding protein family with the PICOT containing proteins AtGRXS14 and AtGRXS16 in Arabidopsis thaliana.</title>
        <authorList>
            <person name="Valassakis C."/>
            <person name="Dervisi I."/>
            <person name="Agalou A."/>
            <person name="Papandreou N."/>
            <person name="Kapetsis G."/>
            <person name="Podia V."/>
            <person name="Haralampidis K."/>
            <person name="Iconomidou V.A."/>
            <person name="Spaink H.P."/>
            <person name="Roussis A."/>
        </authorList>
    </citation>
    <scope>INTERACTION WITH SBP1</scope>
</reference>
<reference key="12">
    <citation type="journal article" date="2010" name="Acta Crystallogr. D">
        <title>Structure of Arabidopsis chloroplastic monothiol glutaredoxin AtGRXcp.</title>
        <authorList>
            <person name="Li L."/>
            <person name="Cheng N."/>
            <person name="Hirschi K.D."/>
            <person name="Wang X."/>
        </authorList>
    </citation>
    <scope>X-RAY CRYSTALLOGRAPHY (2.40 ANGSTROMS) OF 65-173</scope>
</reference>
<reference key="13">
    <citation type="journal article" date="2014" name="J. Biol. Chem.">
        <title>Structural and spectroscopic insights into BolA-glutaredoxin complexes.</title>
        <authorList>
            <person name="Roret T."/>
            <person name="Tsan P."/>
            <person name="Couturier J."/>
            <person name="Zhang B."/>
            <person name="Johnson M.K."/>
            <person name="Rouhier N."/>
            <person name="Didierjean C."/>
        </authorList>
    </citation>
    <scope>STRUCTURE BY NMR OF 67-173 IN COMPLEX WITH BOLA1</scope>
    <scope>DOMAIN</scope>
</reference>
<feature type="transit peptide" description="Chloroplast" evidence="4">
    <location>
        <begin position="1"/>
        <end position="63"/>
    </location>
</feature>
<feature type="chain" id="PRO_0000268734" description="Monothiol glutaredoxin-S14, chloroplastic">
    <location>
        <begin position="64"/>
        <end position="173"/>
    </location>
</feature>
<feature type="domain" description="Glutaredoxin" evidence="5">
    <location>
        <begin position="72"/>
        <end position="173"/>
    </location>
</feature>
<feature type="region of interest" description="Required for CAX1 activation">
    <location>
        <begin position="97"/>
        <end position="100"/>
    </location>
</feature>
<feature type="region of interest" description="Required for CAX1 activation">
    <location>
        <begin position="133"/>
        <end position="137"/>
    </location>
</feature>
<feature type="binding site" evidence="1">
    <location>
        <position position="89"/>
    </location>
    <ligand>
        <name>glutathione</name>
        <dbReference type="ChEBI" id="CHEBI:57925"/>
    </ligand>
</feature>
<feature type="binding site" evidence="18 19">
    <location>
        <position position="97"/>
    </location>
    <ligand>
        <name>[2Fe-2S] cluster</name>
        <dbReference type="ChEBI" id="CHEBI:190135"/>
        <note>ligand shared between dimeric partners</note>
    </ligand>
</feature>
<feature type="binding site" evidence="18 19">
    <location>
        <position position="99"/>
    </location>
    <ligand>
        <name>[2Fe-2S] cluster</name>
        <dbReference type="ChEBI" id="CHEBI:190135"/>
        <note>ligand shared between dimeric partners</note>
    </ligand>
</feature>
<feature type="binding site" evidence="1">
    <location>
        <position position="126"/>
    </location>
    <ligand>
        <name>glutathione</name>
        <dbReference type="ChEBI" id="CHEBI:57925"/>
    </ligand>
</feature>
<feature type="binding site" evidence="19">
    <location>
        <position position="130"/>
    </location>
    <ligand>
        <name>glutathione</name>
        <dbReference type="ChEBI" id="CHEBI:57925"/>
    </ligand>
</feature>
<feature type="binding site" evidence="1">
    <location>
        <position position="138"/>
    </location>
    <ligand>
        <name>glutathione</name>
        <dbReference type="ChEBI" id="CHEBI:57925"/>
    </ligand>
</feature>
<feature type="binding site" evidence="1">
    <location>
        <begin position="151"/>
        <end position="152"/>
    </location>
    <ligand>
        <name>glutathione</name>
        <dbReference type="ChEBI" id="CHEBI:57925"/>
    </ligand>
</feature>
<feature type="modified residue" description="S-glutathionyl cysteine" evidence="3">
    <location>
        <position position="97"/>
    </location>
</feature>
<feature type="disulfide bond" description="Interchain" evidence="19">
    <location>
        <position position="172"/>
    </location>
</feature>
<feature type="mutagenesis site" description="Loss of CAX1 activation." evidence="6">
    <original>CGFS</original>
    <variation>AAAA</variation>
    <location>
        <begin position="97"/>
        <end position="100"/>
    </location>
</feature>
<feature type="mutagenesis site" description="Decreases protein stability." evidence="7">
    <original>C</original>
    <variation>A</variation>
    <location>
        <position position="97"/>
    </location>
</feature>
<feature type="mutagenesis site" description="No effect on interactions with BOLA proteins, but strongly reduced interaction with SUFE1." evidence="9">
    <original>C</original>
    <variation>S</variation>
    <location>
        <position position="97"/>
    </location>
</feature>
<feature type="mutagenesis site" description="No effect on protein stability." evidence="7">
    <original>F</original>
    <variation>A</variation>
    <location>
        <position position="99"/>
    </location>
</feature>
<feature type="mutagenesis site" description="Loss of CAX1 activation." evidence="6">
    <original>SNWPT</original>
    <variation>AAAAA</variation>
    <location>
        <begin position="133"/>
        <end position="137"/>
    </location>
</feature>
<feature type="sequence conflict" description="In Ref. 1; AAO19647." evidence="17" ref="1">
    <original>S</original>
    <variation>P</variation>
    <location>
        <position position="14"/>
    </location>
</feature>
<feature type="helix" evidence="22">
    <location>
        <begin position="69"/>
        <end position="79"/>
    </location>
</feature>
<feature type="strand" evidence="22">
    <location>
        <begin position="81"/>
        <end position="90"/>
    </location>
</feature>
<feature type="strand" evidence="22">
    <location>
        <begin position="92"/>
        <end position="97"/>
    </location>
</feature>
<feature type="helix" evidence="22">
    <location>
        <begin position="98"/>
        <end position="109"/>
    </location>
</feature>
<feature type="strand" evidence="22">
    <location>
        <begin position="115"/>
        <end position="118"/>
    </location>
</feature>
<feature type="helix" evidence="22">
    <location>
        <begin position="119"/>
        <end position="121"/>
    </location>
</feature>
<feature type="helix" evidence="22">
    <location>
        <begin position="123"/>
        <end position="133"/>
    </location>
</feature>
<feature type="strand" evidence="22">
    <location>
        <begin position="136"/>
        <end position="138"/>
    </location>
</feature>
<feature type="strand" evidence="22">
    <location>
        <begin position="140"/>
        <end position="143"/>
    </location>
</feature>
<feature type="strand" evidence="22">
    <location>
        <begin position="146"/>
        <end position="149"/>
    </location>
</feature>
<feature type="helix" evidence="22">
    <location>
        <begin position="151"/>
        <end position="160"/>
    </location>
</feature>
<feature type="helix" evidence="22">
    <location>
        <begin position="162"/>
        <end position="172"/>
    </location>
</feature>
<evidence type="ECO:0000250" key="1">
    <source>
        <dbReference type="UniProtKB" id="P0AC69"/>
    </source>
</evidence>
<evidence type="ECO:0000250" key="2">
    <source>
        <dbReference type="UniProtKB" id="Q03835"/>
    </source>
</evidence>
<evidence type="ECO:0000250" key="3">
    <source>
        <dbReference type="UniProtKB" id="Q9NS18"/>
    </source>
</evidence>
<evidence type="ECO:0000255" key="4"/>
<evidence type="ECO:0000255" key="5">
    <source>
        <dbReference type="PROSITE-ProRule" id="PRU00686"/>
    </source>
</evidence>
<evidence type="ECO:0000269" key="6">
    <source>
    </source>
</evidence>
<evidence type="ECO:0000269" key="7">
    <source>
    </source>
</evidence>
<evidence type="ECO:0000269" key="8">
    <source>
    </source>
</evidence>
<evidence type="ECO:0000269" key="9">
    <source>
    </source>
</evidence>
<evidence type="ECO:0000269" key="10">
    <source>
    </source>
</evidence>
<evidence type="ECO:0000269" key="11">
    <source>
    </source>
</evidence>
<evidence type="ECO:0000269" key="12">
    <source>
    </source>
</evidence>
<evidence type="ECO:0000303" key="13">
    <source>
    </source>
</evidence>
<evidence type="ECO:0000303" key="14">
    <source>
    </source>
</evidence>
<evidence type="ECO:0000303" key="15">
    <source>
    </source>
</evidence>
<evidence type="ECO:0000303" key="16">
    <source>
    </source>
</evidence>
<evidence type="ECO:0000305" key="17"/>
<evidence type="ECO:0000305" key="18">
    <source>
    </source>
</evidence>
<evidence type="ECO:0000305" key="19">
    <source>
    </source>
</evidence>
<evidence type="ECO:0000312" key="20">
    <source>
        <dbReference type="Araport" id="AT3G54900"/>
    </source>
</evidence>
<evidence type="ECO:0000312" key="21">
    <source>
        <dbReference type="EMBL" id="CAB41094.1"/>
    </source>
</evidence>
<evidence type="ECO:0007829" key="22">
    <source>
        <dbReference type="PDB" id="3IPZ"/>
    </source>
</evidence>
<organism>
    <name type="scientific">Arabidopsis thaliana</name>
    <name type="common">Mouse-ear cress</name>
    <dbReference type="NCBI Taxonomy" id="3702"/>
    <lineage>
        <taxon>Eukaryota</taxon>
        <taxon>Viridiplantae</taxon>
        <taxon>Streptophyta</taxon>
        <taxon>Embryophyta</taxon>
        <taxon>Tracheophyta</taxon>
        <taxon>Spermatophyta</taxon>
        <taxon>Magnoliopsida</taxon>
        <taxon>eudicotyledons</taxon>
        <taxon>Gunneridae</taxon>
        <taxon>Pentapetalae</taxon>
        <taxon>rosids</taxon>
        <taxon>malvids</taxon>
        <taxon>Brassicales</taxon>
        <taxon>Brassicaceae</taxon>
        <taxon>Camelineae</taxon>
        <taxon>Arabidopsis</taxon>
    </lineage>
</organism>
<accession>Q84Y95</accession>
<accession>Q9SV38</accession>
<comment type="function">
    <text evidence="7 8 10 17">May only reduce GSH-thiol disulfides, but not protein disulfides (Potential). Probably involved in the regulation of the redox state of the BOLA proteins (Potential). May act as Fe-S cluster donors to Fe-S cluster-requiring proteins (PubMed:18044966). May protect cells against protein oxidative damage (PubMed:16829529). May regulate CAX cation transporters (PubMed:16829529). The GRXS14-BOLA1 heterodimer binds a labile, oxygen sensitive Fe-S cluster (PubMed:24714563).</text>
</comment>
<comment type="subunit">
    <text evidence="2 6 9 10 12">[2Fe-2S]-bridged holo-homodimer (By similarity). Interacts with N-terminal part of CAX1 in yeast (PubMed:12480930). Interacts in vitro with SUFE1, BOLA1, BOLA2 and BOLA4 (PubMed:24203231). Interacts in vivo only with SUFE1, BOLA1 and BOLA4 (By similarity) (PubMed:12480930, PubMed:24203231, PubMed:24714563). Interacts with SBP1 (PubMed:30824043).</text>
</comment>
<comment type="subcellular location">
    <subcellularLocation>
        <location evidence="7">Plastid</location>
        <location evidence="7">Chloroplast</location>
    </subcellularLocation>
</comment>
<comment type="tissue specificity">
    <text evidence="6 7">Highly expressed in leaves, at intermediate levels in stems and at lower levels in roots and flowers.</text>
</comment>
<comment type="induction">
    <text evidence="6 7">By sodium and magnesium chloride.</text>
</comment>
<comment type="domain">
    <text evidence="11">The C-terminal region (79-168) is involved in BOLA recognition in GRXS-BOLA apo-heterodimer.</text>
</comment>
<comment type="disruption phenotype">
    <text evidence="7">Plants display high sensitivity to external oxidants, and their content of protein carbonylation is higher than wild-type plants.</text>
</comment>
<comment type="miscellaneous">
    <text evidence="11">The GRXS14-BOLA1 apo-heterodimer model derived from NMR data shows a domain arrangement totally different from the holo-heterodimer showing evidence for a Rieske-type ligation of a [2Fe-2S] cluster.</text>
</comment>
<comment type="similarity">
    <text evidence="17">Belongs to the glutaredoxin family. CGFS subfamily.</text>
</comment>
<proteinExistence type="evidence at protein level"/>
<sequence length="173" mass="19309">MALRSVKTPTLITSVAVVSSSVTNKPHSIRFSLKPTSALVVHNHQLSFYGSNLKLKPTKFRCSASALTPQLKDTLEKLVNSEKVVLFMKGTRDFPMCGFSNTVVQILKNLNVPFEDVNILENEMLRQGLKEYSNWPTFPQLYIGGEFFGGCDITLEAFKTGELQEEVEKAMCS</sequence>
<dbReference type="EMBL" id="AY157988">
    <property type="protein sequence ID" value="AAO19647.1"/>
    <property type="molecule type" value="mRNA"/>
</dbReference>
<dbReference type="EMBL" id="AL049655">
    <property type="protein sequence ID" value="CAB41094.1"/>
    <property type="molecule type" value="Genomic_DNA"/>
</dbReference>
<dbReference type="EMBL" id="CP002686">
    <property type="protein sequence ID" value="AEE79309.1"/>
    <property type="molecule type" value="Genomic_DNA"/>
</dbReference>
<dbReference type="EMBL" id="AF385708">
    <property type="protein sequence ID" value="AAK60300.1"/>
    <property type="molecule type" value="mRNA"/>
</dbReference>
<dbReference type="EMBL" id="AY078020">
    <property type="protein sequence ID" value="AAL77721.1"/>
    <property type="molecule type" value="mRNA"/>
</dbReference>
<dbReference type="PIR" id="T06730">
    <property type="entry name" value="T06730"/>
</dbReference>
<dbReference type="RefSeq" id="NP_191050.1">
    <property type="nucleotide sequence ID" value="NM_115347.4"/>
</dbReference>
<dbReference type="PDB" id="2MMA">
    <property type="method" value="NMR"/>
    <property type="chains" value="A=65-173"/>
</dbReference>
<dbReference type="PDB" id="3IPZ">
    <property type="method" value="X-ray"/>
    <property type="resolution" value="2.40 A"/>
    <property type="chains" value="A=65-173"/>
</dbReference>
<dbReference type="PDBsum" id="2MMA"/>
<dbReference type="PDBsum" id="3IPZ"/>
<dbReference type="BMRB" id="Q84Y95"/>
<dbReference type="SMR" id="Q84Y95"/>
<dbReference type="BioGRID" id="9971">
    <property type="interactions" value="10"/>
</dbReference>
<dbReference type="FunCoup" id="Q84Y95">
    <property type="interactions" value="2529"/>
</dbReference>
<dbReference type="IntAct" id="Q84Y95">
    <property type="interactions" value="4"/>
</dbReference>
<dbReference type="STRING" id="3702.Q84Y95"/>
<dbReference type="PaxDb" id="3702-AT3G54900.1"/>
<dbReference type="ProteomicsDB" id="222275"/>
<dbReference type="EnsemblPlants" id="AT3G54900.1">
    <property type="protein sequence ID" value="AT3G54900.1"/>
    <property type="gene ID" value="AT3G54900"/>
</dbReference>
<dbReference type="GeneID" id="824655"/>
<dbReference type="Gramene" id="AT3G54900.1">
    <property type="protein sequence ID" value="AT3G54900.1"/>
    <property type="gene ID" value="AT3G54900"/>
</dbReference>
<dbReference type="KEGG" id="ath:AT3G54900"/>
<dbReference type="Araport" id="AT3G54900"/>
<dbReference type="TAIR" id="AT3G54900">
    <property type="gene designation" value="CXIP1"/>
</dbReference>
<dbReference type="eggNOG" id="KOG0911">
    <property type="taxonomic scope" value="Eukaryota"/>
</dbReference>
<dbReference type="HOGENOM" id="CLU_026126_3_2_1"/>
<dbReference type="InParanoid" id="Q84Y95"/>
<dbReference type="OMA" id="VFTHNLH"/>
<dbReference type="PhylomeDB" id="Q84Y95"/>
<dbReference type="EvolutionaryTrace" id="Q84Y95"/>
<dbReference type="PRO" id="PR:Q84Y95"/>
<dbReference type="Proteomes" id="UP000006548">
    <property type="component" value="Chromosome 3"/>
</dbReference>
<dbReference type="ExpressionAtlas" id="Q84Y95">
    <property type="expression patterns" value="baseline and differential"/>
</dbReference>
<dbReference type="GO" id="GO:0009507">
    <property type="term" value="C:chloroplast"/>
    <property type="evidence" value="ECO:0000314"/>
    <property type="project" value="TAIR"/>
</dbReference>
<dbReference type="GO" id="GO:0009941">
    <property type="term" value="C:chloroplast envelope"/>
    <property type="evidence" value="ECO:0007005"/>
    <property type="project" value="TAIR"/>
</dbReference>
<dbReference type="GO" id="GO:0009570">
    <property type="term" value="C:chloroplast stroma"/>
    <property type="evidence" value="ECO:0007005"/>
    <property type="project" value="TAIR"/>
</dbReference>
<dbReference type="GO" id="GO:0051537">
    <property type="term" value="F:2 iron, 2 sulfur cluster binding"/>
    <property type="evidence" value="ECO:0007669"/>
    <property type="project" value="UniProtKB-KW"/>
</dbReference>
<dbReference type="GO" id="GO:0015297">
    <property type="term" value="F:antiporter activity"/>
    <property type="evidence" value="ECO:0000314"/>
    <property type="project" value="TAIR"/>
</dbReference>
<dbReference type="GO" id="GO:0046872">
    <property type="term" value="F:metal ion binding"/>
    <property type="evidence" value="ECO:0007669"/>
    <property type="project" value="UniProtKB-KW"/>
</dbReference>
<dbReference type="GO" id="GO:0006812">
    <property type="term" value="P:monoatomic cation transport"/>
    <property type="evidence" value="ECO:0000314"/>
    <property type="project" value="TAIR"/>
</dbReference>
<dbReference type="CDD" id="cd03028">
    <property type="entry name" value="GRX_PICOT_like"/>
    <property type="match status" value="1"/>
</dbReference>
<dbReference type="FunFam" id="3.40.30.10:FF:000005">
    <property type="entry name" value="Glutaredoxin 5"/>
    <property type="match status" value="1"/>
</dbReference>
<dbReference type="Gene3D" id="3.40.30.10">
    <property type="entry name" value="Glutaredoxin"/>
    <property type="match status" value="1"/>
</dbReference>
<dbReference type="InterPro" id="IPR002109">
    <property type="entry name" value="Glutaredoxin"/>
</dbReference>
<dbReference type="InterPro" id="IPR033658">
    <property type="entry name" value="GRX_PICOT-like"/>
</dbReference>
<dbReference type="InterPro" id="IPR004480">
    <property type="entry name" value="Monothiol_GRX-rel"/>
</dbReference>
<dbReference type="InterPro" id="IPR036249">
    <property type="entry name" value="Thioredoxin-like_sf"/>
</dbReference>
<dbReference type="NCBIfam" id="TIGR00365">
    <property type="entry name" value="Grx4 family monothiol glutaredoxin"/>
    <property type="match status" value="1"/>
</dbReference>
<dbReference type="PANTHER" id="PTHR10293">
    <property type="entry name" value="GLUTAREDOXIN FAMILY MEMBER"/>
    <property type="match status" value="1"/>
</dbReference>
<dbReference type="PANTHER" id="PTHR10293:SF72">
    <property type="entry name" value="MONOTHIOL GLUTAREDOXIN-S14, CHLOROPLASTIC"/>
    <property type="match status" value="1"/>
</dbReference>
<dbReference type="Pfam" id="PF00462">
    <property type="entry name" value="Glutaredoxin"/>
    <property type="match status" value="1"/>
</dbReference>
<dbReference type="SUPFAM" id="SSF52833">
    <property type="entry name" value="Thioredoxin-like"/>
    <property type="match status" value="1"/>
</dbReference>
<dbReference type="PROSITE" id="PS51354">
    <property type="entry name" value="GLUTAREDOXIN_2"/>
    <property type="match status" value="1"/>
</dbReference>
<gene>
    <name evidence="14" type="primary">GRXS14</name>
    <name evidence="13" type="synonym">CXIP1</name>
    <name evidence="16" type="synonym">GRX5P</name>
    <name evidence="15" type="synonym">GRXCP</name>
    <name evidence="20" type="ordered locus">At3g54900</name>
    <name evidence="21" type="ORF">F28P10.120</name>
</gene>
<keyword id="KW-0001">2Fe-2S</keyword>
<keyword id="KW-0002">3D-structure</keyword>
<keyword id="KW-0150">Chloroplast</keyword>
<keyword id="KW-1015">Disulfide bond</keyword>
<keyword id="KW-0318">Glutathionylation</keyword>
<keyword id="KW-0408">Iron</keyword>
<keyword id="KW-0411">Iron-sulfur</keyword>
<keyword id="KW-0479">Metal-binding</keyword>
<keyword id="KW-0934">Plastid</keyword>
<keyword id="KW-0676">Redox-active center</keyword>
<keyword id="KW-1185">Reference proteome</keyword>
<keyword id="KW-0809">Transit peptide</keyword>